<accession>B1Y0T0</accession>
<organism>
    <name type="scientific">Leptothrix cholodnii (strain ATCC 51168 / LMG 8142 / SP-6)</name>
    <name type="common">Leptothrix discophora (strain SP-6)</name>
    <dbReference type="NCBI Taxonomy" id="395495"/>
    <lineage>
        <taxon>Bacteria</taxon>
        <taxon>Pseudomonadati</taxon>
        <taxon>Pseudomonadota</taxon>
        <taxon>Betaproteobacteria</taxon>
        <taxon>Burkholderiales</taxon>
        <taxon>Sphaerotilaceae</taxon>
        <taxon>Leptothrix</taxon>
    </lineage>
</organism>
<dbReference type="EC" id="2.1.1.77" evidence="1"/>
<dbReference type="EMBL" id="CP001013">
    <property type="protein sequence ID" value="ACB34188.1"/>
    <property type="molecule type" value="Genomic_DNA"/>
</dbReference>
<dbReference type="RefSeq" id="WP_012346949.1">
    <property type="nucleotide sequence ID" value="NC_010524.1"/>
</dbReference>
<dbReference type="SMR" id="B1Y0T0"/>
<dbReference type="STRING" id="395495.Lcho_1921"/>
<dbReference type="KEGG" id="lch:Lcho_1921"/>
<dbReference type="eggNOG" id="COG2518">
    <property type="taxonomic scope" value="Bacteria"/>
</dbReference>
<dbReference type="HOGENOM" id="CLU_055432_1_0_4"/>
<dbReference type="OrthoDB" id="9810066at2"/>
<dbReference type="Proteomes" id="UP000001693">
    <property type="component" value="Chromosome"/>
</dbReference>
<dbReference type="GO" id="GO:0005737">
    <property type="term" value="C:cytoplasm"/>
    <property type="evidence" value="ECO:0007669"/>
    <property type="project" value="UniProtKB-SubCell"/>
</dbReference>
<dbReference type="GO" id="GO:0004719">
    <property type="term" value="F:protein-L-isoaspartate (D-aspartate) O-methyltransferase activity"/>
    <property type="evidence" value="ECO:0007669"/>
    <property type="project" value="UniProtKB-UniRule"/>
</dbReference>
<dbReference type="GO" id="GO:0032259">
    <property type="term" value="P:methylation"/>
    <property type="evidence" value="ECO:0007669"/>
    <property type="project" value="UniProtKB-KW"/>
</dbReference>
<dbReference type="GO" id="GO:0036211">
    <property type="term" value="P:protein modification process"/>
    <property type="evidence" value="ECO:0007669"/>
    <property type="project" value="UniProtKB-UniRule"/>
</dbReference>
<dbReference type="GO" id="GO:0030091">
    <property type="term" value="P:protein repair"/>
    <property type="evidence" value="ECO:0007669"/>
    <property type="project" value="UniProtKB-UniRule"/>
</dbReference>
<dbReference type="CDD" id="cd02440">
    <property type="entry name" value="AdoMet_MTases"/>
    <property type="match status" value="1"/>
</dbReference>
<dbReference type="FunFam" id="3.40.50.150:FF:000010">
    <property type="entry name" value="Protein-L-isoaspartate O-methyltransferase"/>
    <property type="match status" value="1"/>
</dbReference>
<dbReference type="Gene3D" id="3.40.50.150">
    <property type="entry name" value="Vaccinia Virus protein VP39"/>
    <property type="match status" value="1"/>
</dbReference>
<dbReference type="HAMAP" id="MF_00090">
    <property type="entry name" value="PIMT"/>
    <property type="match status" value="1"/>
</dbReference>
<dbReference type="InterPro" id="IPR000682">
    <property type="entry name" value="PCMT"/>
</dbReference>
<dbReference type="InterPro" id="IPR029063">
    <property type="entry name" value="SAM-dependent_MTases_sf"/>
</dbReference>
<dbReference type="NCBIfam" id="TIGR00080">
    <property type="entry name" value="pimt"/>
    <property type="match status" value="1"/>
</dbReference>
<dbReference type="NCBIfam" id="NF001453">
    <property type="entry name" value="PRK00312.1"/>
    <property type="match status" value="1"/>
</dbReference>
<dbReference type="PANTHER" id="PTHR11579">
    <property type="entry name" value="PROTEIN-L-ISOASPARTATE O-METHYLTRANSFERASE"/>
    <property type="match status" value="1"/>
</dbReference>
<dbReference type="PANTHER" id="PTHR11579:SF0">
    <property type="entry name" value="PROTEIN-L-ISOASPARTATE(D-ASPARTATE) O-METHYLTRANSFERASE"/>
    <property type="match status" value="1"/>
</dbReference>
<dbReference type="Pfam" id="PF01135">
    <property type="entry name" value="PCMT"/>
    <property type="match status" value="1"/>
</dbReference>
<dbReference type="SUPFAM" id="SSF53335">
    <property type="entry name" value="S-adenosyl-L-methionine-dependent methyltransferases"/>
    <property type="match status" value="1"/>
</dbReference>
<comment type="function">
    <text evidence="1">Catalyzes the methyl esterification of L-isoaspartyl residues in peptides and proteins that result from spontaneous decomposition of normal L-aspartyl and L-asparaginyl residues. It plays a role in the repair and/or degradation of damaged proteins.</text>
</comment>
<comment type="catalytic activity">
    <reaction evidence="1">
        <text>[protein]-L-isoaspartate + S-adenosyl-L-methionine = [protein]-L-isoaspartate alpha-methyl ester + S-adenosyl-L-homocysteine</text>
        <dbReference type="Rhea" id="RHEA:12705"/>
        <dbReference type="Rhea" id="RHEA-COMP:12143"/>
        <dbReference type="Rhea" id="RHEA-COMP:12144"/>
        <dbReference type="ChEBI" id="CHEBI:57856"/>
        <dbReference type="ChEBI" id="CHEBI:59789"/>
        <dbReference type="ChEBI" id="CHEBI:90596"/>
        <dbReference type="ChEBI" id="CHEBI:90598"/>
        <dbReference type="EC" id="2.1.1.77"/>
    </reaction>
</comment>
<comment type="subcellular location">
    <subcellularLocation>
        <location evidence="1">Cytoplasm</location>
    </subcellularLocation>
</comment>
<comment type="similarity">
    <text evidence="1">Belongs to the methyltransferase superfamily. L-isoaspartyl/D-aspartyl protein methyltransferase family.</text>
</comment>
<evidence type="ECO:0000255" key="1">
    <source>
        <dbReference type="HAMAP-Rule" id="MF_00090"/>
    </source>
</evidence>
<keyword id="KW-0963">Cytoplasm</keyword>
<keyword id="KW-0489">Methyltransferase</keyword>
<keyword id="KW-1185">Reference proteome</keyword>
<keyword id="KW-0949">S-adenosyl-L-methionine</keyword>
<keyword id="KW-0808">Transferase</keyword>
<gene>
    <name evidence="1" type="primary">pcm</name>
    <name type="ordered locus">Lcho_1921</name>
</gene>
<name>PIMT_LEPCP</name>
<proteinExistence type="inferred from homology"/>
<feature type="chain" id="PRO_0000351872" description="Protein-L-isoaspartate O-methyltransferase">
    <location>
        <begin position="1"/>
        <end position="283"/>
    </location>
</feature>
<feature type="active site" evidence="1">
    <location>
        <position position="122"/>
    </location>
</feature>
<sequence length="283" mass="30853">MSESQPPRRGRFPLPLSATTPVVRRFVSTGQAVLQPVPPRPQRPASEITRETARPAILAGHGLDSDGFRARMIERLRADGCRDEHVLRAMSRVPRHLFVDSALAAQAYEDTSLPIGHGQTISKPSVVARMLGLLRQRPGGAQLGRVLEIGTGCGYQAAVLCRLASQVYSIERLKALHDRARENLAPMRRDQLRLIYGDGLHGHGPNAPFDAIIAAAGGHAIPQAWLDQLAVCGRLVAPMHDAQRGTQVLVVVDRMPDGSLVQHRHETVRFVPLESGTSDYKPA</sequence>
<reference key="1">
    <citation type="submission" date="2008-03" db="EMBL/GenBank/DDBJ databases">
        <title>Complete sequence of Leptothrix cholodnii SP-6.</title>
        <authorList>
            <consortium name="US DOE Joint Genome Institute"/>
            <person name="Copeland A."/>
            <person name="Lucas S."/>
            <person name="Lapidus A."/>
            <person name="Glavina del Rio T."/>
            <person name="Dalin E."/>
            <person name="Tice H."/>
            <person name="Bruce D."/>
            <person name="Goodwin L."/>
            <person name="Pitluck S."/>
            <person name="Chertkov O."/>
            <person name="Brettin T."/>
            <person name="Detter J.C."/>
            <person name="Han C."/>
            <person name="Kuske C.R."/>
            <person name="Schmutz J."/>
            <person name="Larimer F."/>
            <person name="Land M."/>
            <person name="Hauser L."/>
            <person name="Kyrpides N."/>
            <person name="Lykidis A."/>
            <person name="Emerson D."/>
            <person name="Richardson P."/>
        </authorList>
    </citation>
    <scope>NUCLEOTIDE SEQUENCE [LARGE SCALE GENOMIC DNA]</scope>
    <source>
        <strain>ATCC 51168 / LMG 8142 / SP-6</strain>
    </source>
</reference>
<protein>
    <recommendedName>
        <fullName evidence="1">Protein-L-isoaspartate O-methyltransferase</fullName>
        <ecNumber evidence="1">2.1.1.77</ecNumber>
    </recommendedName>
    <alternativeName>
        <fullName evidence="1">L-isoaspartyl protein carboxyl methyltransferase</fullName>
    </alternativeName>
    <alternativeName>
        <fullName evidence="1">Protein L-isoaspartyl methyltransferase</fullName>
    </alternativeName>
    <alternativeName>
        <fullName evidence="1">Protein-beta-aspartate methyltransferase</fullName>
        <shortName evidence="1">PIMT</shortName>
    </alternativeName>
</protein>